<name>SELA_SHIDS</name>
<comment type="function">
    <text evidence="1">Converts seryl-tRNA(Sec) to selenocysteinyl-tRNA(Sec) required for selenoprotein biosynthesis.</text>
</comment>
<comment type="catalytic activity">
    <reaction evidence="1">
        <text>L-seryl-tRNA(Sec) + selenophosphate + H(+) = L-selenocysteinyl-tRNA(Sec) + phosphate</text>
        <dbReference type="Rhea" id="RHEA:22728"/>
        <dbReference type="Rhea" id="RHEA-COMP:9742"/>
        <dbReference type="Rhea" id="RHEA-COMP:9743"/>
        <dbReference type="ChEBI" id="CHEBI:15378"/>
        <dbReference type="ChEBI" id="CHEBI:16144"/>
        <dbReference type="ChEBI" id="CHEBI:43474"/>
        <dbReference type="ChEBI" id="CHEBI:78533"/>
        <dbReference type="ChEBI" id="CHEBI:78573"/>
        <dbReference type="EC" id="2.9.1.1"/>
    </reaction>
</comment>
<comment type="cofactor">
    <cofactor evidence="1">
        <name>pyridoxal 5'-phosphate</name>
        <dbReference type="ChEBI" id="CHEBI:597326"/>
    </cofactor>
</comment>
<comment type="pathway">
    <text evidence="1">Aminoacyl-tRNA biosynthesis; selenocysteinyl-tRNA(Sec) biosynthesis; selenocysteinyl-tRNA(Sec) from L-seryl-tRNA(Sec) (bacterial route): step 1/1.</text>
</comment>
<comment type="subunit">
    <text evidence="1">Homodecamer; pentamer of dimers. Binds only one seryl-tRNA(Sec) per dimer.</text>
</comment>
<comment type="subcellular location">
    <subcellularLocation>
        <location evidence="1">Cytoplasm</location>
    </subcellularLocation>
</comment>
<comment type="similarity">
    <text evidence="1">Belongs to the SelA family.</text>
</comment>
<dbReference type="EC" id="2.9.1.1" evidence="1"/>
<dbReference type="EMBL" id="CP000034">
    <property type="protein sequence ID" value="ABB64116.1"/>
    <property type="molecule type" value="Genomic_DNA"/>
</dbReference>
<dbReference type="RefSeq" id="WP_000206268.1">
    <property type="nucleotide sequence ID" value="NC_007606.1"/>
</dbReference>
<dbReference type="RefSeq" id="YP_405607.1">
    <property type="nucleotide sequence ID" value="NC_007606.1"/>
</dbReference>
<dbReference type="SMR" id="Q328Y9"/>
<dbReference type="STRING" id="300267.SDY_4212"/>
<dbReference type="EnsemblBacteria" id="ABB64116">
    <property type="protein sequence ID" value="ABB64116"/>
    <property type="gene ID" value="SDY_4212"/>
</dbReference>
<dbReference type="KEGG" id="sdy:SDY_4212"/>
<dbReference type="PATRIC" id="fig|300267.13.peg.4952"/>
<dbReference type="HOGENOM" id="CLU_038142_1_0_6"/>
<dbReference type="UniPathway" id="UPA00906">
    <property type="reaction ID" value="UER00896"/>
</dbReference>
<dbReference type="Proteomes" id="UP000002716">
    <property type="component" value="Chromosome"/>
</dbReference>
<dbReference type="GO" id="GO:0005737">
    <property type="term" value="C:cytoplasm"/>
    <property type="evidence" value="ECO:0007669"/>
    <property type="project" value="UniProtKB-SubCell"/>
</dbReference>
<dbReference type="GO" id="GO:0004125">
    <property type="term" value="F:L-seryl-tRNA(Sec) selenium transferase activity"/>
    <property type="evidence" value="ECO:0007669"/>
    <property type="project" value="UniProtKB-UniRule"/>
</dbReference>
<dbReference type="GO" id="GO:0001717">
    <property type="term" value="P:conversion of seryl-tRNAsec to selenocys-tRNAsec"/>
    <property type="evidence" value="ECO:0007669"/>
    <property type="project" value="UniProtKB-UniRule"/>
</dbReference>
<dbReference type="GO" id="GO:0001514">
    <property type="term" value="P:selenocysteine incorporation"/>
    <property type="evidence" value="ECO:0007669"/>
    <property type="project" value="UniProtKB-UniRule"/>
</dbReference>
<dbReference type="FunFam" id="3.40.640.10:FF:000028">
    <property type="entry name" value="L-seryl-tRNA(Sec) selenium transferase"/>
    <property type="match status" value="1"/>
</dbReference>
<dbReference type="FunFam" id="3.90.1150.180:FF:000001">
    <property type="entry name" value="L-seryl-tRNA(Sec) selenium transferase"/>
    <property type="match status" value="1"/>
</dbReference>
<dbReference type="Gene3D" id="3.90.1150.180">
    <property type="match status" value="1"/>
</dbReference>
<dbReference type="Gene3D" id="3.40.640.10">
    <property type="entry name" value="Type I PLP-dependent aspartate aminotransferase-like (Major domain)"/>
    <property type="match status" value="1"/>
</dbReference>
<dbReference type="HAMAP" id="MF_00423">
    <property type="entry name" value="SelA"/>
    <property type="match status" value="1"/>
</dbReference>
<dbReference type="InterPro" id="IPR015424">
    <property type="entry name" value="PyrdxlP-dep_Trfase"/>
</dbReference>
<dbReference type="InterPro" id="IPR015421">
    <property type="entry name" value="PyrdxlP-dep_Trfase_major"/>
</dbReference>
<dbReference type="InterPro" id="IPR018319">
    <property type="entry name" value="SelA-like"/>
</dbReference>
<dbReference type="InterPro" id="IPR004534">
    <property type="entry name" value="SelA_trans"/>
</dbReference>
<dbReference type="InterPro" id="IPR025862">
    <property type="entry name" value="SelA_trans_N_dom"/>
</dbReference>
<dbReference type="NCBIfam" id="TIGR00474">
    <property type="entry name" value="selA"/>
    <property type="match status" value="1"/>
</dbReference>
<dbReference type="PANTHER" id="PTHR32328">
    <property type="entry name" value="L-SERYL-TRNA(SEC) SELENIUM TRANSFERASE"/>
    <property type="match status" value="1"/>
</dbReference>
<dbReference type="PANTHER" id="PTHR32328:SF0">
    <property type="entry name" value="L-SERYL-TRNA(SEC) SELENIUM TRANSFERASE"/>
    <property type="match status" value="1"/>
</dbReference>
<dbReference type="Pfam" id="PF12390">
    <property type="entry name" value="Se-cys_synth_N"/>
    <property type="match status" value="1"/>
</dbReference>
<dbReference type="Pfam" id="PF03841">
    <property type="entry name" value="SelA"/>
    <property type="match status" value="1"/>
</dbReference>
<dbReference type="SUPFAM" id="SSF53383">
    <property type="entry name" value="PLP-dependent transferases"/>
    <property type="match status" value="1"/>
</dbReference>
<sequence>MTTETRSLYSQLPAIDRLLRDSSFLSLRDTYGHTRVVELLRQMLDEAREVIRDSQTLPTWCENWAQEVDARLTKEAQSALRPVINLTGTVLHTNLGRALQAEAAVEAVAQAMRSPVTLEYDLDDAGRGHRDRALAQLLCRITGVEDACIVNNNAAAVLLMLAATASGKEVVVSRGELVEIGGSFRIPDVMRQAGCTLHEVGTTNRTHANDYRQAVNENTALLMKVHTSNYSIQGFTKAIDEAELVALGKELDVPVVTDLGSGSLVDLSQYGLPKEPMPQELIAAGVSLVSFSGDKLLGGPQAGIIVGKKEMIARLQSHPLKRALRADKMTLAALEATLRLYLHPEALSEKLPTLRLLTRSAEVIQIQAQRLQAPLAAHYGAEFAVQVMPCLSQIGSGSLPVDRLPSAALTFTPHDGRGSHLESLAARWRELPVPVIGRIYDGRLWLDLRCLEDEQRFLEMLLK</sequence>
<keyword id="KW-0963">Cytoplasm</keyword>
<keyword id="KW-0648">Protein biosynthesis</keyword>
<keyword id="KW-0663">Pyridoxal phosphate</keyword>
<keyword id="KW-1185">Reference proteome</keyword>
<keyword id="KW-0711">Selenium</keyword>
<keyword id="KW-0808">Transferase</keyword>
<gene>
    <name evidence="1" type="primary">selA</name>
    <name type="ordered locus">SDY_4212</name>
</gene>
<feature type="chain" id="PRO_1000050382" description="L-seryl-tRNA(Sec) selenium transferase">
    <location>
        <begin position="1"/>
        <end position="463"/>
    </location>
</feature>
<feature type="modified residue" description="N6-(pyridoxal phosphate)lysine" evidence="1">
    <location>
        <position position="295"/>
    </location>
</feature>
<reference key="1">
    <citation type="journal article" date="2005" name="Nucleic Acids Res.">
        <title>Genome dynamics and diversity of Shigella species, the etiologic agents of bacillary dysentery.</title>
        <authorList>
            <person name="Yang F."/>
            <person name="Yang J."/>
            <person name="Zhang X."/>
            <person name="Chen L."/>
            <person name="Jiang Y."/>
            <person name="Yan Y."/>
            <person name="Tang X."/>
            <person name="Wang J."/>
            <person name="Xiong Z."/>
            <person name="Dong J."/>
            <person name="Xue Y."/>
            <person name="Zhu Y."/>
            <person name="Xu X."/>
            <person name="Sun L."/>
            <person name="Chen S."/>
            <person name="Nie H."/>
            <person name="Peng J."/>
            <person name="Xu J."/>
            <person name="Wang Y."/>
            <person name="Yuan Z."/>
            <person name="Wen Y."/>
            <person name="Yao Z."/>
            <person name="Shen Y."/>
            <person name="Qiang B."/>
            <person name="Hou Y."/>
            <person name="Yu J."/>
            <person name="Jin Q."/>
        </authorList>
    </citation>
    <scope>NUCLEOTIDE SEQUENCE [LARGE SCALE GENOMIC DNA]</scope>
    <source>
        <strain>Sd197</strain>
    </source>
</reference>
<evidence type="ECO:0000255" key="1">
    <source>
        <dbReference type="HAMAP-Rule" id="MF_00423"/>
    </source>
</evidence>
<organism>
    <name type="scientific">Shigella dysenteriae serotype 1 (strain Sd197)</name>
    <dbReference type="NCBI Taxonomy" id="300267"/>
    <lineage>
        <taxon>Bacteria</taxon>
        <taxon>Pseudomonadati</taxon>
        <taxon>Pseudomonadota</taxon>
        <taxon>Gammaproteobacteria</taxon>
        <taxon>Enterobacterales</taxon>
        <taxon>Enterobacteriaceae</taxon>
        <taxon>Shigella</taxon>
    </lineage>
</organism>
<accession>Q328Y9</accession>
<proteinExistence type="inferred from homology"/>
<protein>
    <recommendedName>
        <fullName evidence="1">L-seryl-tRNA(Sec) selenium transferase</fullName>
        <ecNumber evidence="1">2.9.1.1</ecNumber>
    </recommendedName>
    <alternativeName>
        <fullName evidence="1">Selenocysteine synthase</fullName>
        <shortName evidence="1">Sec synthase</shortName>
    </alternativeName>
    <alternativeName>
        <fullName evidence="1">Selenocysteinyl-tRNA(Sec) synthase</fullName>
    </alternativeName>
</protein>